<dbReference type="EMBL" id="AL391147">
    <property type="protein sequence ID" value="CAC01838.1"/>
    <property type="molecule type" value="Genomic_DNA"/>
</dbReference>
<dbReference type="EMBL" id="CP002688">
    <property type="protein sequence ID" value="AED92332.1"/>
    <property type="molecule type" value="Genomic_DNA"/>
</dbReference>
<dbReference type="PIR" id="T51506">
    <property type="entry name" value="T51506"/>
</dbReference>
<dbReference type="RefSeq" id="NP_197176.1">
    <property type="nucleotide sequence ID" value="NM_121680.1"/>
</dbReference>
<dbReference type="SMR" id="Q9LFE3"/>
<dbReference type="FunCoup" id="Q9LFE3">
    <property type="interactions" value="285"/>
</dbReference>
<dbReference type="STRING" id="3702.Q9LFE3"/>
<dbReference type="PaxDb" id="3702-AT5G16740.1"/>
<dbReference type="EnsemblPlants" id="AT5G16740.1">
    <property type="protein sequence ID" value="AT5G16740.1"/>
    <property type="gene ID" value="AT5G16740"/>
</dbReference>
<dbReference type="GeneID" id="831537"/>
<dbReference type="Gramene" id="AT5G16740.1">
    <property type="protein sequence ID" value="AT5G16740.1"/>
    <property type="gene ID" value="AT5G16740"/>
</dbReference>
<dbReference type="KEGG" id="ath:AT5G16740"/>
<dbReference type="Araport" id="AT5G16740"/>
<dbReference type="TAIR" id="AT5G16740"/>
<dbReference type="eggNOG" id="KOG1303">
    <property type="taxonomic scope" value="Eukaryota"/>
</dbReference>
<dbReference type="HOGENOM" id="CLU_009646_1_1_1"/>
<dbReference type="InParanoid" id="Q9LFE3"/>
<dbReference type="OMA" id="AICYTVC"/>
<dbReference type="PhylomeDB" id="Q9LFE3"/>
<dbReference type="PRO" id="PR:Q9LFE3"/>
<dbReference type="Proteomes" id="UP000006548">
    <property type="component" value="Chromosome 5"/>
</dbReference>
<dbReference type="ExpressionAtlas" id="Q9LFE3">
    <property type="expression patterns" value="baseline and differential"/>
</dbReference>
<dbReference type="GO" id="GO:0031090">
    <property type="term" value="C:organelle membrane"/>
    <property type="evidence" value="ECO:0007669"/>
    <property type="project" value="UniProtKB-ARBA"/>
</dbReference>
<dbReference type="GO" id="GO:0006865">
    <property type="term" value="P:amino acid transport"/>
    <property type="evidence" value="ECO:0007669"/>
    <property type="project" value="UniProtKB-KW"/>
</dbReference>
<dbReference type="InterPro" id="IPR013057">
    <property type="entry name" value="AA_transpt_TM"/>
</dbReference>
<dbReference type="PANTHER" id="PTHR22950">
    <property type="entry name" value="AMINO ACID TRANSPORTER"/>
    <property type="match status" value="1"/>
</dbReference>
<dbReference type="PANTHER" id="PTHR22950:SF696">
    <property type="entry name" value="AMINO ACID TRANSPORTER TRANSMEMBRANE DOMAIN-CONTAINING PROTEIN"/>
    <property type="match status" value="1"/>
</dbReference>
<dbReference type="Pfam" id="PF01490">
    <property type="entry name" value="Aa_trans"/>
    <property type="match status" value="1"/>
</dbReference>
<sequence length="426" mass="45808">MVCVACVEENKGCECEHEKPVRELVLEAASENSSFLHSVINMVGMLIGLGQLSMPYAVESGGWMSIFLLISFGILTTYTSHILGKCIRRNPKSKSYSDIGYSAFGRHGRLIVCLFIYLEIFMALVSYTISLHDNISAAFPATFSNHGHFPAAKLTAVAVAIALPSLWIRDLSSISFLSSGGILMSAIIFGSVVYTAIFGGVIDDGKIPVLRLENIPTVSGIYLFSFGGHIVFPNLYTSMKDPSKFTKVSIVSFATVTALYGALAITGAKMFGPSVNSQITLSLPKHLVVTKIALWATVLTPMTKYALEFAPLAIQLERSLPSTMTDRTKLVARGLMGSALLLVILALALTVPYFGYVLSLTGSLVSVTIAVTLPSAFYLKICWDGMTKFTRAANLGFVVLGCVLGVLGSFESSKLLVKELVRVHGG</sequence>
<feature type="chain" id="PRO_0000440109" description="Amino acid transporter AVT1H">
    <location>
        <begin position="1"/>
        <end position="426"/>
    </location>
</feature>
<feature type="transmembrane region" description="Helical; Name=1" evidence="1">
    <location>
        <begin position="34"/>
        <end position="54"/>
    </location>
</feature>
<feature type="transmembrane region" description="Helical; Name=2" evidence="1">
    <location>
        <begin position="55"/>
        <end position="75"/>
    </location>
</feature>
<feature type="transmembrane region" description="Helical; Name=3" evidence="1">
    <location>
        <begin position="110"/>
        <end position="130"/>
    </location>
</feature>
<feature type="transmembrane region" description="Helical; Name=4" evidence="1">
    <location>
        <begin position="148"/>
        <end position="168"/>
    </location>
</feature>
<feature type="transmembrane region" description="Helical; Name=5" evidence="1">
    <location>
        <begin position="182"/>
        <end position="202"/>
    </location>
</feature>
<feature type="transmembrane region" description="Helical; Name=6" evidence="1">
    <location>
        <begin position="215"/>
        <end position="235"/>
    </location>
</feature>
<feature type="transmembrane region" description="Helical; Name=7" evidence="1">
    <location>
        <begin position="248"/>
        <end position="268"/>
    </location>
</feature>
<feature type="transmembrane region" description="Helical; Name=8" evidence="1">
    <location>
        <begin position="292"/>
        <end position="312"/>
    </location>
</feature>
<feature type="transmembrane region" description="Helical; Name=9" evidence="1">
    <location>
        <begin position="340"/>
        <end position="360"/>
    </location>
</feature>
<feature type="transmembrane region" description="Helical; Name=10" evidence="1">
    <location>
        <begin position="363"/>
        <end position="383"/>
    </location>
</feature>
<feature type="transmembrane region" description="Helical; Name=11" evidence="1">
    <location>
        <begin position="392"/>
        <end position="412"/>
    </location>
</feature>
<accession>Q9LFE3</accession>
<organism>
    <name type="scientific">Arabidopsis thaliana</name>
    <name type="common">Mouse-ear cress</name>
    <dbReference type="NCBI Taxonomy" id="3702"/>
    <lineage>
        <taxon>Eukaryota</taxon>
        <taxon>Viridiplantae</taxon>
        <taxon>Streptophyta</taxon>
        <taxon>Embryophyta</taxon>
        <taxon>Tracheophyta</taxon>
        <taxon>Spermatophyta</taxon>
        <taxon>Magnoliopsida</taxon>
        <taxon>eudicotyledons</taxon>
        <taxon>Gunneridae</taxon>
        <taxon>Pentapetalae</taxon>
        <taxon>rosids</taxon>
        <taxon>malvids</taxon>
        <taxon>Brassicales</taxon>
        <taxon>Brassicaceae</taxon>
        <taxon>Camelineae</taxon>
        <taxon>Arabidopsis</taxon>
    </lineage>
</organism>
<reference key="1">
    <citation type="journal article" date="2000" name="Nature">
        <title>Sequence and analysis of chromosome 5 of the plant Arabidopsis thaliana.</title>
        <authorList>
            <person name="Tabata S."/>
            <person name="Kaneko T."/>
            <person name="Nakamura Y."/>
            <person name="Kotani H."/>
            <person name="Kato T."/>
            <person name="Asamizu E."/>
            <person name="Miyajima N."/>
            <person name="Sasamoto S."/>
            <person name="Kimura T."/>
            <person name="Hosouchi T."/>
            <person name="Kawashima K."/>
            <person name="Kohara M."/>
            <person name="Matsumoto M."/>
            <person name="Matsuno A."/>
            <person name="Muraki A."/>
            <person name="Nakayama S."/>
            <person name="Nakazaki N."/>
            <person name="Naruo K."/>
            <person name="Okumura S."/>
            <person name="Shinpo S."/>
            <person name="Takeuchi C."/>
            <person name="Wada T."/>
            <person name="Watanabe A."/>
            <person name="Yamada M."/>
            <person name="Yasuda M."/>
            <person name="Sato S."/>
            <person name="de la Bastide M."/>
            <person name="Huang E."/>
            <person name="Spiegel L."/>
            <person name="Gnoj L."/>
            <person name="O'Shaughnessy A."/>
            <person name="Preston R."/>
            <person name="Habermann K."/>
            <person name="Murray J."/>
            <person name="Johnson D."/>
            <person name="Rohlfing T."/>
            <person name="Nelson J."/>
            <person name="Stoneking T."/>
            <person name="Pepin K."/>
            <person name="Spieth J."/>
            <person name="Sekhon M."/>
            <person name="Armstrong J."/>
            <person name="Becker M."/>
            <person name="Belter E."/>
            <person name="Cordum H."/>
            <person name="Cordes M."/>
            <person name="Courtney L."/>
            <person name="Courtney W."/>
            <person name="Dante M."/>
            <person name="Du H."/>
            <person name="Edwards J."/>
            <person name="Fryman J."/>
            <person name="Haakensen B."/>
            <person name="Lamar E."/>
            <person name="Latreille P."/>
            <person name="Leonard S."/>
            <person name="Meyer R."/>
            <person name="Mulvaney E."/>
            <person name="Ozersky P."/>
            <person name="Riley A."/>
            <person name="Strowmatt C."/>
            <person name="Wagner-McPherson C."/>
            <person name="Wollam A."/>
            <person name="Yoakum M."/>
            <person name="Bell M."/>
            <person name="Dedhia N."/>
            <person name="Parnell L."/>
            <person name="Shah R."/>
            <person name="Rodriguez M."/>
            <person name="Hoon See L."/>
            <person name="Vil D."/>
            <person name="Baker J."/>
            <person name="Kirchoff K."/>
            <person name="Toth K."/>
            <person name="King L."/>
            <person name="Bahret A."/>
            <person name="Miller B."/>
            <person name="Marra M.A."/>
            <person name="Martienssen R."/>
            <person name="McCombie W.R."/>
            <person name="Wilson R.K."/>
            <person name="Murphy G."/>
            <person name="Bancroft I."/>
            <person name="Volckaert G."/>
            <person name="Wambutt R."/>
            <person name="Duesterhoeft A."/>
            <person name="Stiekema W."/>
            <person name="Pohl T."/>
            <person name="Entian K.-D."/>
            <person name="Terryn N."/>
            <person name="Hartley N."/>
            <person name="Bent E."/>
            <person name="Johnson S."/>
            <person name="Langham S.-A."/>
            <person name="McCullagh B."/>
            <person name="Robben J."/>
            <person name="Grymonprez B."/>
            <person name="Zimmermann W."/>
            <person name="Ramsperger U."/>
            <person name="Wedler H."/>
            <person name="Balke K."/>
            <person name="Wedler E."/>
            <person name="Peters S."/>
            <person name="van Staveren M."/>
            <person name="Dirkse W."/>
            <person name="Mooijman P."/>
            <person name="Klein Lankhorst R."/>
            <person name="Weitzenegger T."/>
            <person name="Bothe G."/>
            <person name="Rose M."/>
            <person name="Hauf J."/>
            <person name="Berneiser S."/>
            <person name="Hempel S."/>
            <person name="Feldpausch M."/>
            <person name="Lamberth S."/>
            <person name="Villarroel R."/>
            <person name="Gielen J."/>
            <person name="Ardiles W."/>
            <person name="Bents O."/>
            <person name="Lemcke K."/>
            <person name="Kolesov G."/>
            <person name="Mayer K.F.X."/>
            <person name="Rudd S."/>
            <person name="Schoof H."/>
            <person name="Schueller C."/>
            <person name="Zaccaria P."/>
            <person name="Mewes H.-W."/>
            <person name="Bevan M."/>
            <person name="Fransz P.F."/>
        </authorList>
    </citation>
    <scope>NUCLEOTIDE SEQUENCE [LARGE SCALE GENOMIC DNA]</scope>
    <source>
        <strain>cv. Columbia</strain>
    </source>
</reference>
<reference key="2">
    <citation type="journal article" date="2017" name="Plant J.">
        <title>Araport11: a complete reannotation of the Arabidopsis thaliana reference genome.</title>
        <authorList>
            <person name="Cheng C.Y."/>
            <person name="Krishnakumar V."/>
            <person name="Chan A.P."/>
            <person name="Thibaud-Nissen F."/>
            <person name="Schobel S."/>
            <person name="Town C.D."/>
        </authorList>
    </citation>
    <scope>GENOME REANNOTATION</scope>
    <source>
        <strain>cv. Columbia</strain>
    </source>
</reference>
<reference key="3">
    <citation type="journal article" date="2017" name="FEBS Lett.">
        <title>Functional identification of AtAVT3, a family of vacuolar amino acid transporters, in Arabidopsis.</title>
        <authorList>
            <person name="Fujiki Y."/>
            <person name="Teshima H."/>
            <person name="Kashiwao S."/>
            <person name="Kawano-Kawada M."/>
            <person name="Ohsumi Y."/>
            <person name="Kakinuma Y."/>
            <person name="Sekito T."/>
        </authorList>
    </citation>
    <scope>GENE FAMILY</scope>
    <scope>NOMENCLATURE</scope>
</reference>
<proteinExistence type="inferred from homology"/>
<gene>
    <name evidence="2" type="primary">AVT1H</name>
    <name evidence="4" type="ordered locus">At5g16740</name>
    <name evidence="5" type="ORF">F5E19.80</name>
</gene>
<name>AVT1H_ARATH</name>
<protein>
    <recommendedName>
        <fullName evidence="3">Amino acid transporter AVT1H</fullName>
        <shortName evidence="2">AtAvt1H</shortName>
    </recommendedName>
</protein>
<comment type="subcellular location">
    <subcellularLocation>
        <location evidence="1">Membrane</location>
        <topology evidence="1">Multi-pass membrane protein</topology>
    </subcellularLocation>
</comment>
<comment type="similarity">
    <text evidence="3">Belongs to the amino acid/polyamine transporter 2 family. Amino acid/auxin permease (AAAP) (TC 2.A.18.5) subfamily.</text>
</comment>
<keyword id="KW-0029">Amino-acid transport</keyword>
<keyword id="KW-0472">Membrane</keyword>
<keyword id="KW-1185">Reference proteome</keyword>
<keyword id="KW-0812">Transmembrane</keyword>
<keyword id="KW-1133">Transmembrane helix</keyword>
<keyword id="KW-0813">Transport</keyword>
<evidence type="ECO:0000255" key="1"/>
<evidence type="ECO:0000303" key="2">
    <source>
    </source>
</evidence>
<evidence type="ECO:0000305" key="3"/>
<evidence type="ECO:0000312" key="4">
    <source>
        <dbReference type="Araport" id="AT5G16740"/>
    </source>
</evidence>
<evidence type="ECO:0000312" key="5">
    <source>
        <dbReference type="EMBL" id="CAC01838.1"/>
    </source>
</evidence>